<gene>
    <name type="primary">pol</name>
</gene>
<evidence type="ECO:0000250" key="1">
    <source>
        <dbReference type="UniProtKB" id="P03332"/>
    </source>
</evidence>
<evidence type="ECO:0000250" key="2">
    <source>
        <dbReference type="UniProtKB" id="P03336"/>
    </source>
</evidence>
<evidence type="ECO:0000250" key="3">
    <source>
        <dbReference type="UniProtKB" id="P03355"/>
    </source>
</evidence>
<evidence type="ECO:0000250" key="4">
    <source>
        <dbReference type="UniProtKB" id="P26807"/>
    </source>
</evidence>
<evidence type="ECO:0000255" key="5"/>
<evidence type="ECO:0000255" key="6">
    <source>
        <dbReference type="PROSITE-ProRule" id="PRU00047"/>
    </source>
</evidence>
<evidence type="ECO:0000255" key="7">
    <source>
        <dbReference type="PROSITE-ProRule" id="PRU00275"/>
    </source>
</evidence>
<evidence type="ECO:0000255" key="8">
    <source>
        <dbReference type="PROSITE-ProRule" id="PRU00405"/>
    </source>
</evidence>
<evidence type="ECO:0000255" key="9">
    <source>
        <dbReference type="PROSITE-ProRule" id="PRU00408"/>
    </source>
</evidence>
<evidence type="ECO:0000255" key="10">
    <source>
        <dbReference type="PROSITE-ProRule" id="PRU00457"/>
    </source>
</evidence>
<evidence type="ECO:0000256" key="11">
    <source>
        <dbReference type="SAM" id="MobiDB-lite"/>
    </source>
</evidence>
<evidence type="ECO:0000305" key="12"/>
<sequence>MGQNNSTPLSLTLDHWKDVRTRAHNLSVKIRKGKWQTFCSSEWPTFGVGWPPEGTFNLSVIFAVKRIVFQETGGHPDQVPYIVVWQDLAQSPPPWVPPSAKIAVVSSPENTRGPSAGRPSAPPRPPIYPATDDLLLLSEPPPYPAALPPPLAPPAVGPAPGQAPDSSDPEGPAAGTRSRRARSPADDSGPDSTVILPLRAIGPPAEPNGLVPLQYWPFSSADLYNWKSNHPSFSENPAGLTGLLESLMFSHQPTWDDCQQLLQILFTTEERERILLEARKNVLGDNGAPTQLENLINEAFPLNRPQWDYNTAAGRERLLVYRRTLVAGLKGAARRPTNLAKVREVLQGPAEPPSVFLERLMEAYRRYTPFDPSEEGQQAAVAMAFIGQSAPDIKKKLQRLEGLQDYSLQDLVREAEKVYHKRETEEERQEREKKEAEERERRRDRRQEKNLTRILAAVVSERGSRDRQTGNLSNRARKTPRDGRPPLDKDQCAYCKEKGHWARECPQKKNVREAKVLALDDQGSRGSDPLPEPRVTLTVEGTPIEFLVDTGAEHSVLTQPMGKVGSRRTVVEGATGSKVYPWTTKRLLKIGHKQVTHSFLVIPECPAPLLGRDLLTKLKAQIQFSAEGPQVTWEDRPTMCLVLNLEEEYRLHEKPVPSSIDPSWLQLFPTVWAERAGMGLANQVPPVVVELRSGASPVAVRQYPMSKEAREGIRPHIQRFLDLGVLVPCQSPWNTPLLPVKKPGTNDYRPVQDLREINKRVQDIHPTVPNPYNLLSSLPPSHTWYSVLDLKDAFFCLKLHPNSQPLFAFEWRDPEKGNTGQLTWTRLPQGFKNSPTLFDEALHRDLAPFRALNPQVVLLQYVDDLLVAAPTYRDCKEGTQKLLQELSKLGYRVSAKKAQLCQKEVTYLGYLLKEGKRWLTPARKATVMKIPPPTTPRQVREFLGTAGFCRLWIPGFASLAAPLYPLTKESIPFIWTEEHQKAFDRIKEALLSAPALALPDLTKPFTLYVDERAGVARGVLTQTLGPWRRPVAYLSKKLDPVASGWPTCLKAVAAVALLLKDADKLTLGQNVTVIASHSLESIVRQPPDRWMTNARMTHYQSLLLNERVSFAPPAVLNPATLLPVESEATPVHRCSEILAEETGTRRDLKDQPLPGVPAWYTDGSSFIAEGKRRAGAAIVDGKRTVWASSLPEGTSAQKAELVALTQALRLAEGKDINIYTDSRYAFATAHIHGAIYKQRGLLTSAGKDIKNKEEILALLEAIHLPKRVAIIHCPGHQKGNDPVATGNRRADEAAKQAALSTRVLAETTKPQELIXPAQVKTRPGELTPDRGKEFIQRLHQLTHLGPEKLLQLVNRTSLLIPNLQSAVREVTSQCQACAMTNAVTTYRETGKRQRGDRPGVYWEVDFTEVKPGRYGNRYLLVFIDTFSGWVEAFPTKTETALTVCKKILEEILPRFGIPKVLGSDNGPAFVAQVSQGLATQLGINWKLHCAYRPQSSGQVERMNRTIKETLTKLALETGXKDWVALLPLALLRARNTPGRFGLTPYEILYGGPPPILESGGTLGPDDNFLPVLFTHLKALEVVRTQIWDQIKEVYKPGTVAIPHPFQVGDQVLVRRHRPGSLEPRWKGPYLVLLTTPTAVKVDGIAAWVHASHLKPAPPSAPDESWELEKADHPLKLRIRRRRNESAK</sequence>
<feature type="initiator methionine" description="Removed" evidence="5">
    <location>
        <position position="1"/>
    </location>
</feature>
<feature type="chain" id="PRO_0000125497" description="Gag-Pol polyprotein">
    <location>
        <begin position="2"/>
        <end position="1687"/>
    </location>
</feature>
<feature type="chain" id="PRO_0000442867" description="Matrix protein p15">
    <location>
        <begin position="2"/>
        <end position="128"/>
    </location>
</feature>
<feature type="chain" id="PRO_0000442868" description="RNA-binding phosphoprotein p12">
    <location>
        <begin position="129"/>
        <end position="196"/>
    </location>
</feature>
<feature type="chain" id="PRO_0000442869" description="Capsid protein p30">
    <location>
        <begin position="197"/>
        <end position="455"/>
    </location>
</feature>
<feature type="chain" id="PRO_0000442870" description="Nucleocapsid protein p10-Pol">
    <location>
        <begin position="456"/>
        <end position="517"/>
    </location>
</feature>
<feature type="chain" id="PRO_0000442871" description="Protease">
    <location>
        <begin position="518"/>
        <end position="641"/>
    </location>
</feature>
<feature type="chain" id="PRO_0000442872" description="Reverse transcriptase/ribonuclease H">
    <location>
        <begin position="642"/>
        <end position="1310"/>
    </location>
</feature>
<feature type="chain" id="PRO_0000442873" description="Integrase">
    <location>
        <begin position="1311"/>
        <end position="1683"/>
    </location>
</feature>
<feature type="domain" description="Peptidase A2" evidence="7">
    <location>
        <begin position="544"/>
        <end position="614"/>
    </location>
</feature>
<feature type="domain" description="Reverse transcriptase" evidence="8">
    <location>
        <begin position="721"/>
        <end position="912"/>
    </location>
</feature>
<feature type="domain" description="RNase H type-1" evidence="9">
    <location>
        <begin position="1153"/>
        <end position="1299"/>
    </location>
</feature>
<feature type="domain" description="Integrase catalytic" evidence="10">
    <location>
        <begin position="1394"/>
        <end position="1552"/>
    </location>
</feature>
<feature type="zinc finger region" description="CCHC-type" evidence="6">
    <location>
        <begin position="490"/>
        <end position="507"/>
    </location>
</feature>
<feature type="zinc finger region" description="HHCC-type" evidence="3">
    <location>
        <begin position="1339"/>
        <end position="1377"/>
    </location>
</feature>
<feature type="region of interest" description="Disordered" evidence="11">
    <location>
        <begin position="106"/>
        <end position="197"/>
    </location>
</feature>
<feature type="region of interest" description="Disordered" evidence="11">
    <location>
        <begin position="420"/>
        <end position="490"/>
    </location>
</feature>
<feature type="coiled-coil region" evidence="5">
    <location>
        <begin position="408"/>
        <end position="455"/>
    </location>
</feature>
<feature type="short sequence motif" description="PTAP/PSAP motif" evidence="1">
    <location>
        <begin position="108"/>
        <end position="111"/>
    </location>
</feature>
<feature type="short sequence motif" description="PPXY motif" evidence="1">
    <location>
        <begin position="140"/>
        <end position="143"/>
    </location>
</feature>
<feature type="compositionally biased region" description="Pro residues" evidence="11">
    <location>
        <begin position="139"/>
        <end position="157"/>
    </location>
</feature>
<feature type="compositionally biased region" description="Basic and acidic residues" evidence="11">
    <location>
        <begin position="420"/>
        <end position="451"/>
    </location>
</feature>
<feature type="compositionally biased region" description="Basic and acidic residues" evidence="11">
    <location>
        <begin position="479"/>
        <end position="490"/>
    </location>
</feature>
<feature type="active site" description="Protease; shared with dimeric partner" evidence="7">
    <location>
        <position position="549"/>
    </location>
</feature>
<feature type="binding site" evidence="8">
    <location>
        <position position="789"/>
    </location>
    <ligand>
        <name>Mg(2+)</name>
        <dbReference type="ChEBI" id="CHEBI:18420"/>
        <label>1</label>
        <note>catalytic; for reverse transcriptase activity</note>
    </ligand>
</feature>
<feature type="binding site" evidence="8">
    <location>
        <position position="863"/>
    </location>
    <ligand>
        <name>Mg(2+)</name>
        <dbReference type="ChEBI" id="CHEBI:18420"/>
        <label>1</label>
        <note>catalytic; for reverse transcriptase activity</note>
    </ligand>
</feature>
<feature type="binding site" evidence="8">
    <location>
        <position position="864"/>
    </location>
    <ligand>
        <name>Mg(2+)</name>
        <dbReference type="ChEBI" id="CHEBI:18420"/>
        <label>1</label>
        <note>catalytic; for reverse transcriptase activity</note>
    </ligand>
</feature>
<feature type="binding site" evidence="9">
    <location>
        <position position="1180"/>
    </location>
    <ligand>
        <name>Mg(2+)</name>
        <dbReference type="ChEBI" id="CHEBI:18420"/>
        <label>2</label>
        <note>catalytic; for RNase H activity</note>
    </ligand>
</feature>
<feature type="binding site" evidence="9">
    <location>
        <position position="1200"/>
    </location>
    <ligand>
        <name>Mg(2+)</name>
        <dbReference type="ChEBI" id="CHEBI:18420"/>
        <label>2</label>
        <note>catalytic; for RNase H activity</note>
    </ligand>
</feature>
<feature type="binding site" evidence="9">
    <location>
        <position position="1221"/>
    </location>
    <ligand>
        <name>Mg(2+)</name>
        <dbReference type="ChEBI" id="CHEBI:18420"/>
        <label>2</label>
        <note>catalytic; for RNase H activity</note>
    </ligand>
</feature>
<feature type="binding site" evidence="9">
    <location>
        <position position="1291"/>
    </location>
    <ligand>
        <name>Mg(2+)</name>
        <dbReference type="ChEBI" id="CHEBI:18420"/>
        <label>2</label>
        <note>catalytic; for RNase H activity</note>
    </ligand>
</feature>
<feature type="binding site" evidence="10">
    <location>
        <position position="1405"/>
    </location>
    <ligand>
        <name>Mg(2+)</name>
        <dbReference type="ChEBI" id="CHEBI:18420"/>
        <label>3</label>
        <note>catalytic; for integrase activity</note>
    </ligand>
</feature>
<feature type="binding site" evidence="10">
    <location>
        <position position="1464"/>
    </location>
    <ligand>
        <name>Mg(2+)</name>
        <dbReference type="ChEBI" id="CHEBI:18420"/>
        <label>3</label>
        <note>catalytic; for integrase activity</note>
    </ligand>
</feature>
<feature type="site" description="Cleavage; by viral protease" evidence="3">
    <location>
        <begin position="128"/>
        <end position="129"/>
    </location>
</feature>
<feature type="site" description="Cleavage; by viral protease" evidence="3">
    <location>
        <begin position="196"/>
        <end position="197"/>
    </location>
</feature>
<feature type="site" description="Cleavage; by viral protease" evidence="3">
    <location>
        <begin position="455"/>
        <end position="456"/>
    </location>
</feature>
<feature type="site" description="Cleavage; by viral protease" evidence="3">
    <location>
        <begin position="517"/>
        <end position="518"/>
    </location>
</feature>
<feature type="site" description="Cleavage; by viral protease" evidence="3">
    <location>
        <begin position="641"/>
        <end position="642"/>
    </location>
</feature>
<feature type="site" description="Cleavage; by viral protease" evidence="3">
    <location>
        <begin position="1310"/>
        <end position="1311"/>
    </location>
</feature>
<feature type="lipid moiety-binding region" description="N-myristoyl glycine; by host" evidence="5">
    <location>
        <position position="2"/>
    </location>
</feature>
<organism>
    <name type="scientific">Woolly monkey sarcoma virus</name>
    <name type="common">WMSV</name>
    <name type="synonym">Simian sarcoma-associated virus</name>
    <dbReference type="NCBI Taxonomy" id="11970"/>
    <lineage>
        <taxon>Viruses</taxon>
        <taxon>Riboviria</taxon>
        <taxon>Pararnavirae</taxon>
        <taxon>Artverviricota</taxon>
        <taxon>Revtraviricetes</taxon>
        <taxon>Ortervirales</taxon>
        <taxon>Retroviridae</taxon>
        <taxon>Orthoretrovirinae</taxon>
        <taxon>Gammaretrovirus</taxon>
    </lineage>
</organism>
<protein>
    <recommendedName>
        <fullName>Gag-Pol polyprotein</fullName>
    </recommendedName>
    <component>
        <recommendedName>
            <fullName>Matrix protein p15</fullName>
            <shortName>MA</shortName>
        </recommendedName>
    </component>
    <component>
        <recommendedName>
            <fullName>RNA-binding phosphoprotein p12</fullName>
        </recommendedName>
        <alternativeName>
            <fullName>pp12</fullName>
        </alternativeName>
    </component>
    <component>
        <recommendedName>
            <fullName>Capsid protein p30</fullName>
            <shortName>CA</shortName>
        </recommendedName>
    </component>
    <component>
        <recommendedName>
            <fullName>Nucleocapsid protein p10-Pol</fullName>
            <shortName>NC-pol</shortName>
        </recommendedName>
    </component>
    <component>
        <recommendedName>
            <fullName>Protease</fullName>
            <shortName>PR</shortName>
            <ecNumber evidence="7">3.4.23.-</ecNumber>
        </recommendedName>
    </component>
    <component>
        <recommendedName>
            <fullName>Reverse transcriptase/ribonuclease H</fullName>
            <shortName>RT</shortName>
            <ecNumber evidence="8">2.7.7.49</ecNumber>
            <ecNumber evidence="8">2.7.7.7</ecNumber>
            <ecNumber evidence="9">3.1.26.4</ecNumber>
        </recommendedName>
        <alternativeName>
            <fullName>p80</fullName>
        </alternativeName>
    </component>
    <component>
        <recommendedName>
            <fullName>Integrase</fullName>
            <shortName>IN</shortName>
            <ecNumber>2.7.7.-</ecNumber>
            <ecNumber>3.1.-.-</ecNumber>
        </recommendedName>
        <alternativeName>
            <fullName>p46</fullName>
        </alternativeName>
    </component>
</protein>
<organismHost>
    <name type="scientific">Lagothrix</name>
    <name type="common">woolly monkeys</name>
    <dbReference type="NCBI Taxonomy" id="9518"/>
</organismHost>
<reference key="1">
    <citation type="journal article" date="2015" name="J. Virol.">
        <title>Episodic diversifying selection shaped the genomes of gibbon ape leukemia virus and related gammaretroviruses.</title>
        <authorList>
            <person name="Alfano N."/>
            <person name="Kolokotronis S.O."/>
            <person name="Tsangaras K."/>
            <person name="Roca A.L."/>
            <person name="Xu W."/>
            <person name="Eiden M.V."/>
            <person name="Greenwood A.D."/>
        </authorList>
    </citation>
    <scope>NUCLEOTIDE SEQUENCE [LARGE SCALE GENOMIC DNA]</scope>
    <source>
        <strain>SSAV</strain>
    </source>
</reference>
<reference key="2">
    <citation type="journal article" date="1983" name="Proc. Natl. Acad. Sci. U.S.A.">
        <title>Nucleotide sequence of the simian sarcoma virus genome: demonstration that its acquired cellular sequences encode the transforming gene product p28sis.</title>
        <authorList>
            <person name="Devare S.G."/>
            <person name="Reddy E.P."/>
            <person name="Law J.D."/>
            <person name="Robbins K.C."/>
            <person name="Aaronson S.A."/>
        </authorList>
    </citation>
    <scope>NUCLEOTIDE SEQUENCE [GENOMIC DNA] OF 1390-1687</scope>
</reference>
<keyword id="KW-0064">Aspartyl protease</keyword>
<keyword id="KW-0167">Capsid protein</keyword>
<keyword id="KW-0175">Coiled coil</keyword>
<keyword id="KW-0229">DNA integration</keyword>
<keyword id="KW-0233">DNA recombination</keyword>
<keyword id="KW-0238">DNA-binding</keyword>
<keyword id="KW-0239">DNA-directed DNA polymerase</keyword>
<keyword id="KW-0255">Endonuclease</keyword>
<keyword id="KW-1032">Host cell membrane</keyword>
<keyword id="KW-1035">Host cytoplasm</keyword>
<keyword id="KW-1039">Host endosome</keyword>
<keyword id="KW-1043">Host membrane</keyword>
<keyword id="KW-0945">Host-virus interaction</keyword>
<keyword id="KW-0378">Hydrolase</keyword>
<keyword id="KW-0449">Lipoprotein</keyword>
<keyword id="KW-0460">Magnesium</keyword>
<keyword id="KW-0472">Membrane</keyword>
<keyword id="KW-0479">Metal-binding</keyword>
<keyword id="KW-0511">Multifunctional enzyme</keyword>
<keyword id="KW-0519">Myristate</keyword>
<keyword id="KW-0540">Nuclease</keyword>
<keyword id="KW-0548">Nucleotidyltransferase</keyword>
<keyword id="KW-0597">Phosphoprotein</keyword>
<keyword id="KW-0645">Protease</keyword>
<keyword id="KW-0694">RNA-binding</keyword>
<keyword id="KW-0695">RNA-directed DNA polymerase</keyword>
<keyword id="KW-0808">Transferase</keyword>
<keyword id="KW-1179">Viral genome integration</keyword>
<keyword id="KW-0468">Viral matrix protein</keyword>
<keyword id="KW-0543">Viral nucleoprotein</keyword>
<keyword id="KW-0946">Virion</keyword>
<keyword id="KW-1160">Virus entry into host cell</keyword>
<keyword id="KW-0862">Zinc</keyword>
<keyword id="KW-0863">Zinc-finger</keyword>
<dbReference type="EC" id="3.4.23.-" evidence="7"/>
<dbReference type="EC" id="2.7.7.49" evidence="8"/>
<dbReference type="EC" id="2.7.7.7" evidence="8"/>
<dbReference type="EC" id="3.1.26.4" evidence="9"/>
<dbReference type="EC" id="2.7.7.-"/>
<dbReference type="EC" id="3.1.-.-"/>
<dbReference type="EMBL" id="KT724051">
    <property type="protein sequence ID" value="ALV83312.1"/>
    <property type="status" value="ALT_INIT"/>
    <property type="molecule type" value="Genomic_DNA"/>
</dbReference>
<dbReference type="EMBL" id="V01201">
    <property type="protein sequence ID" value="CAA24515.1"/>
    <property type="status" value="ALT_SEQ"/>
    <property type="molecule type" value="Genomic_DNA"/>
</dbReference>
<dbReference type="PIR" id="A05071">
    <property type="entry name" value="A05071"/>
</dbReference>
<dbReference type="RefSeq" id="YP_001165470.1">
    <property type="nucleotide sequence ID" value="NC_009424.4"/>
</dbReference>
<dbReference type="BindingDB" id="P03359"/>
<dbReference type="ChEMBL" id="CHEMBL2983"/>
<dbReference type="KEGG" id="vg:5176146"/>
<dbReference type="Proteomes" id="UP000167400">
    <property type="component" value="Genome"/>
</dbReference>
<dbReference type="Proteomes" id="UP000203831">
    <property type="component" value="Genome"/>
</dbReference>
<dbReference type="GO" id="GO:0044185">
    <property type="term" value="C:host cell late endosome membrane"/>
    <property type="evidence" value="ECO:0007669"/>
    <property type="project" value="UniProtKB-SubCell"/>
</dbReference>
<dbReference type="GO" id="GO:0020002">
    <property type="term" value="C:host cell plasma membrane"/>
    <property type="evidence" value="ECO:0007669"/>
    <property type="project" value="UniProtKB-SubCell"/>
</dbReference>
<dbReference type="GO" id="GO:0072494">
    <property type="term" value="C:host multivesicular body"/>
    <property type="evidence" value="ECO:0007669"/>
    <property type="project" value="UniProtKB-SubCell"/>
</dbReference>
<dbReference type="GO" id="GO:0016020">
    <property type="term" value="C:membrane"/>
    <property type="evidence" value="ECO:0007669"/>
    <property type="project" value="UniProtKB-KW"/>
</dbReference>
<dbReference type="GO" id="GO:0019013">
    <property type="term" value="C:viral nucleocapsid"/>
    <property type="evidence" value="ECO:0007669"/>
    <property type="project" value="UniProtKB-KW"/>
</dbReference>
<dbReference type="GO" id="GO:0004190">
    <property type="term" value="F:aspartic-type endopeptidase activity"/>
    <property type="evidence" value="ECO:0007669"/>
    <property type="project" value="UniProtKB-KW"/>
</dbReference>
<dbReference type="GO" id="GO:0003677">
    <property type="term" value="F:DNA binding"/>
    <property type="evidence" value="ECO:0007669"/>
    <property type="project" value="UniProtKB-KW"/>
</dbReference>
<dbReference type="GO" id="GO:0003887">
    <property type="term" value="F:DNA-directed DNA polymerase activity"/>
    <property type="evidence" value="ECO:0007669"/>
    <property type="project" value="UniProtKB-KW"/>
</dbReference>
<dbReference type="GO" id="GO:0003723">
    <property type="term" value="F:RNA binding"/>
    <property type="evidence" value="ECO:0007669"/>
    <property type="project" value="UniProtKB-KW"/>
</dbReference>
<dbReference type="GO" id="GO:0003964">
    <property type="term" value="F:RNA-directed DNA polymerase activity"/>
    <property type="evidence" value="ECO:0007669"/>
    <property type="project" value="UniProtKB-KW"/>
</dbReference>
<dbReference type="GO" id="GO:0004523">
    <property type="term" value="F:RNA-DNA hybrid ribonuclease activity"/>
    <property type="evidence" value="ECO:0007669"/>
    <property type="project" value="UniProtKB-EC"/>
</dbReference>
<dbReference type="GO" id="GO:0039660">
    <property type="term" value="F:structural constituent of virion"/>
    <property type="evidence" value="ECO:0007669"/>
    <property type="project" value="UniProtKB-KW"/>
</dbReference>
<dbReference type="GO" id="GO:0008270">
    <property type="term" value="F:zinc ion binding"/>
    <property type="evidence" value="ECO:0007669"/>
    <property type="project" value="UniProtKB-KW"/>
</dbReference>
<dbReference type="GO" id="GO:0015074">
    <property type="term" value="P:DNA integration"/>
    <property type="evidence" value="ECO:0007669"/>
    <property type="project" value="UniProtKB-KW"/>
</dbReference>
<dbReference type="GO" id="GO:0006310">
    <property type="term" value="P:DNA recombination"/>
    <property type="evidence" value="ECO:0007669"/>
    <property type="project" value="UniProtKB-KW"/>
</dbReference>
<dbReference type="GO" id="GO:0075713">
    <property type="term" value="P:establishment of integrated proviral latency"/>
    <property type="evidence" value="ECO:0007669"/>
    <property type="project" value="UniProtKB-KW"/>
</dbReference>
<dbReference type="GO" id="GO:0006508">
    <property type="term" value="P:proteolysis"/>
    <property type="evidence" value="ECO:0007669"/>
    <property type="project" value="UniProtKB-KW"/>
</dbReference>
<dbReference type="GO" id="GO:0046718">
    <property type="term" value="P:symbiont entry into host cell"/>
    <property type="evidence" value="ECO:0007669"/>
    <property type="project" value="UniProtKB-KW"/>
</dbReference>
<dbReference type="GO" id="GO:0044826">
    <property type="term" value="P:viral genome integration into host DNA"/>
    <property type="evidence" value="ECO:0007669"/>
    <property type="project" value="UniProtKB-KW"/>
</dbReference>
<dbReference type="GO" id="GO:0019068">
    <property type="term" value="P:virion assembly"/>
    <property type="evidence" value="ECO:0007669"/>
    <property type="project" value="InterPro"/>
</dbReference>
<dbReference type="CDD" id="cd09273">
    <property type="entry name" value="RNase_HI_RT_Bel"/>
    <property type="match status" value="1"/>
</dbReference>
<dbReference type="CDD" id="cd06095">
    <property type="entry name" value="RP_RTVL_H_like"/>
    <property type="match status" value="1"/>
</dbReference>
<dbReference type="CDD" id="cd03715">
    <property type="entry name" value="RT_ZFREV_like"/>
    <property type="match status" value="1"/>
</dbReference>
<dbReference type="FunFam" id="3.30.70.270:FF:000020">
    <property type="entry name" value="Transposon Tf2-6 polyprotein-like Protein"/>
    <property type="match status" value="1"/>
</dbReference>
<dbReference type="Gene3D" id="1.10.340.70">
    <property type="match status" value="1"/>
</dbReference>
<dbReference type="Gene3D" id="2.30.30.850">
    <property type="match status" value="1"/>
</dbReference>
<dbReference type="Gene3D" id="3.10.20.370">
    <property type="match status" value="1"/>
</dbReference>
<dbReference type="Gene3D" id="3.30.70.270">
    <property type="match status" value="2"/>
</dbReference>
<dbReference type="Gene3D" id="2.40.70.10">
    <property type="entry name" value="Acid Proteases"/>
    <property type="match status" value="1"/>
</dbReference>
<dbReference type="Gene3D" id="1.10.150.180">
    <property type="entry name" value="Gamma-retroviral matrix domain"/>
    <property type="match status" value="1"/>
</dbReference>
<dbReference type="Gene3D" id="3.10.10.10">
    <property type="entry name" value="HIV Type 1 Reverse Transcriptase, subunit A, domain 1"/>
    <property type="match status" value="1"/>
</dbReference>
<dbReference type="Gene3D" id="1.10.375.10">
    <property type="entry name" value="Human Immunodeficiency Virus Type 1 Capsid Protein"/>
    <property type="match status" value="1"/>
</dbReference>
<dbReference type="Gene3D" id="3.30.420.10">
    <property type="entry name" value="Ribonuclease H-like superfamily/Ribonuclease H"/>
    <property type="match status" value="2"/>
</dbReference>
<dbReference type="Gene3D" id="4.10.60.10">
    <property type="entry name" value="Zinc finger, CCHC-type"/>
    <property type="match status" value="1"/>
</dbReference>
<dbReference type="InterPro" id="IPR001969">
    <property type="entry name" value="Aspartic_peptidase_AS"/>
</dbReference>
<dbReference type="InterPro" id="IPR043502">
    <property type="entry name" value="DNA/RNA_pol_sf"/>
</dbReference>
<dbReference type="InterPro" id="IPR000840">
    <property type="entry name" value="G_retro_matrix"/>
</dbReference>
<dbReference type="InterPro" id="IPR036946">
    <property type="entry name" value="G_retro_matrix_sf"/>
</dbReference>
<dbReference type="InterPro" id="IPR003036">
    <property type="entry name" value="Gag_P30"/>
</dbReference>
<dbReference type="InterPro" id="IPR001584">
    <property type="entry name" value="Integrase_cat-core"/>
</dbReference>
<dbReference type="InterPro" id="IPR040643">
    <property type="entry name" value="MLVIN_C"/>
</dbReference>
<dbReference type="InterPro" id="IPR001995">
    <property type="entry name" value="Peptidase_A2_cat"/>
</dbReference>
<dbReference type="InterPro" id="IPR021109">
    <property type="entry name" value="Peptidase_aspartic_dom_sf"/>
</dbReference>
<dbReference type="InterPro" id="IPR018061">
    <property type="entry name" value="Retropepsins"/>
</dbReference>
<dbReference type="InterPro" id="IPR008919">
    <property type="entry name" value="Retrov_capsid_N"/>
</dbReference>
<dbReference type="InterPro" id="IPR050462">
    <property type="entry name" value="Retroviral_Gag-Pol_poly"/>
</dbReference>
<dbReference type="InterPro" id="IPR010999">
    <property type="entry name" value="Retrovr_matrix"/>
</dbReference>
<dbReference type="InterPro" id="IPR043128">
    <property type="entry name" value="Rev_trsase/Diguanyl_cyclase"/>
</dbReference>
<dbReference type="InterPro" id="IPR012337">
    <property type="entry name" value="RNaseH-like_sf"/>
</dbReference>
<dbReference type="InterPro" id="IPR002156">
    <property type="entry name" value="RNaseH_domain"/>
</dbReference>
<dbReference type="InterPro" id="IPR036397">
    <property type="entry name" value="RNaseH_sf"/>
</dbReference>
<dbReference type="InterPro" id="IPR000477">
    <property type="entry name" value="RT_dom"/>
</dbReference>
<dbReference type="InterPro" id="IPR041577">
    <property type="entry name" value="RT_RNaseH_2"/>
</dbReference>
<dbReference type="InterPro" id="IPR001878">
    <property type="entry name" value="Znf_CCHC"/>
</dbReference>
<dbReference type="InterPro" id="IPR036875">
    <property type="entry name" value="Znf_CCHC_sf"/>
</dbReference>
<dbReference type="InterPro" id="IPR015416">
    <property type="entry name" value="Znf_H2C2_histone_UAS-bd"/>
</dbReference>
<dbReference type="PANTHER" id="PTHR33166">
    <property type="entry name" value="GAG_P30 DOMAIN-CONTAINING PROTEIN"/>
    <property type="match status" value="1"/>
</dbReference>
<dbReference type="Pfam" id="PF01140">
    <property type="entry name" value="Gag_MA"/>
    <property type="match status" value="1"/>
</dbReference>
<dbReference type="Pfam" id="PF02093">
    <property type="entry name" value="Gag_p30"/>
    <property type="match status" value="1"/>
</dbReference>
<dbReference type="Pfam" id="PF18697">
    <property type="entry name" value="MLVIN_C"/>
    <property type="match status" value="1"/>
</dbReference>
<dbReference type="Pfam" id="PF00075">
    <property type="entry name" value="RNase_H"/>
    <property type="match status" value="1"/>
</dbReference>
<dbReference type="Pfam" id="PF17919">
    <property type="entry name" value="RT_RNaseH_2"/>
    <property type="match status" value="1"/>
</dbReference>
<dbReference type="Pfam" id="PF00665">
    <property type="entry name" value="rve"/>
    <property type="match status" value="1"/>
</dbReference>
<dbReference type="Pfam" id="PF00077">
    <property type="entry name" value="RVP"/>
    <property type="match status" value="1"/>
</dbReference>
<dbReference type="Pfam" id="PF00078">
    <property type="entry name" value="RVT_1"/>
    <property type="match status" value="1"/>
</dbReference>
<dbReference type="Pfam" id="PF00098">
    <property type="entry name" value="zf-CCHC"/>
    <property type="match status" value="1"/>
</dbReference>
<dbReference type="Pfam" id="PF09337">
    <property type="entry name" value="zf-H2C2"/>
    <property type="match status" value="1"/>
</dbReference>
<dbReference type="SMART" id="SM00343">
    <property type="entry name" value="ZnF_C2HC"/>
    <property type="match status" value="1"/>
</dbReference>
<dbReference type="SUPFAM" id="SSF50630">
    <property type="entry name" value="Acid proteases"/>
    <property type="match status" value="1"/>
</dbReference>
<dbReference type="SUPFAM" id="SSF56672">
    <property type="entry name" value="DNA/RNA polymerases"/>
    <property type="match status" value="1"/>
</dbReference>
<dbReference type="SUPFAM" id="SSF47836">
    <property type="entry name" value="Retroviral matrix proteins"/>
    <property type="match status" value="1"/>
</dbReference>
<dbReference type="SUPFAM" id="SSF47943">
    <property type="entry name" value="Retrovirus capsid protein, N-terminal core domain"/>
    <property type="match status" value="1"/>
</dbReference>
<dbReference type="SUPFAM" id="SSF57756">
    <property type="entry name" value="Retrovirus zinc finger-like domains"/>
    <property type="match status" value="1"/>
</dbReference>
<dbReference type="SUPFAM" id="SSF53098">
    <property type="entry name" value="Ribonuclease H-like"/>
    <property type="match status" value="2"/>
</dbReference>
<dbReference type="PROSITE" id="PS50175">
    <property type="entry name" value="ASP_PROT_RETROV"/>
    <property type="match status" value="1"/>
</dbReference>
<dbReference type="PROSITE" id="PS00141">
    <property type="entry name" value="ASP_PROTEASE"/>
    <property type="match status" value="1"/>
</dbReference>
<dbReference type="PROSITE" id="PS50994">
    <property type="entry name" value="INTEGRASE"/>
    <property type="match status" value="1"/>
</dbReference>
<dbReference type="PROSITE" id="PS50879">
    <property type="entry name" value="RNASE_H_1"/>
    <property type="match status" value="1"/>
</dbReference>
<dbReference type="PROSITE" id="PS50878">
    <property type="entry name" value="RT_POL"/>
    <property type="match status" value="1"/>
</dbReference>
<dbReference type="PROSITE" id="PS50158">
    <property type="entry name" value="ZF_CCHC"/>
    <property type="match status" value="1"/>
</dbReference>
<comment type="function">
    <molecule>Gag-Pol polyprotein</molecule>
    <text evidence="1">Plays a role in budding and is processed by the viral protease during virion maturation outside the cell. During budding, it recruits, in a PPXY-dependent or independent manner, Nedd4-like ubiquitin ligases that conjugate ubiquitin molecules to Gag-Pol, or to Gag-Pol binding host factors. Interaction with HECT ubiquitin ligases probably links the viral protein to the host ESCRT pathway and facilitates release.</text>
</comment>
<comment type="function">
    <molecule>Matrix protein p15</molecule>
    <text evidence="1">Targets Gag and gag-pol polyproteins to the plasma membrane via a multipartite membrane binding signal, that includes its myristoylated N-terminus. Also mediates nuclear localization of the pre-integration complex.</text>
</comment>
<comment type="function">
    <molecule>RNA-binding phosphoprotein p12</molecule>
    <text evidence="3">Constituent of the pre-integration complex (PIC) which tethers the latter to mitotic chromosomes. This allows the integration of the viral genome into the host DNA.</text>
</comment>
<comment type="function">
    <molecule>Capsid protein p30</molecule>
    <text evidence="2">Forms the spherical core of the virion that encapsulates the genomic RNA-nucleocapsid complex.</text>
</comment>
<comment type="function">
    <molecule>Nucleocapsid protein p10-Pol</molecule>
    <text evidence="1 3">Involved in the packaging and encapsidation of two copies of the genome (By similarity). Binds with high affinity to conserved UCUG elements within the packaging signal, located near the 5'-end of the genome (By similarity). This binding is dependent on genome dimerization (By similarity). Acts as a nucleic acid chaperone which is involved in rearrangement of nucleic acid secondary structures during gRNA retrotranscription (By similarity).</text>
</comment>
<comment type="function">
    <molecule>Protease</molecule>
    <text evidence="7">The aspartyl protease mediates proteolytic cleavages of Gag and Gag-Pol polyproteins during or shortly after the release of the virion from the plasma membrane. Cleavages take place as an ordered, step-wise cascade to yield mature proteins. This process is called maturation. Displays maximal activity during the budding process just prior to particle release from the cell.</text>
</comment>
<comment type="function">
    <molecule>Reverse transcriptase/ribonuclease H</molecule>
    <text evidence="5">RT is a multifunctional enzyme that converts the viral dimeric RNA genome into dsDNA in the cytoplasm, shortly after virus entry into the cell. This enzyme displays a DNA polymerase activity that can copy either DNA or RNA templates, and a ribonuclease H (RNase H) activity that cleaves the RNA strand of RNA-DNA heteroduplexes in a partially processive 3' to 5' endonucleasic mode. Conversion of viral genomic RNA into dsDNA requires many steps. A tRNA binds to the primer-binding site (PBS) situated at the 5' end of the viral RNA. RT uses the 3' end of the tRNA primer to perform a short round of RNA-dependent minus-strand DNA synthesis. The reading proceeds through the U5 region and ends after the repeated (R) region which is present at both ends of viral RNA. The portion of the RNA-DNA heteroduplex is digested by the RNase H, resulting in a ssDNA product attached to the tRNA primer. This ssDNA/tRNA hybridizes with the identical R region situated at the 3' end of viral RNA. This template exchange, known as minus-strand DNA strong stop transfer, can be either intra- or intermolecular. RT uses the 3' end of this newly synthesized short ssDNA to perform the RNA-dependent minus-strand DNA synthesis of the whole template. RNase H digests the RNA template except for a polypurine tract (PPT) situated at the 5' end of the genome. It is not clear if both polymerase and RNase H activities are simultaneous. RNase H probably can proceed both in a polymerase-dependent (RNA cut into small fragments by the same RT performing DNA synthesis) and a polymerase-independent mode (cleavage of remaining RNA fragments by free RTs). Secondly, RT performs DNA-directed plus-strand DNA synthesis using the PPT that has not been removed by RNase H as primers. PPT and tRNA primers are then removed by RNase H. The 3' and 5' ssDNA PBS regions hybridize to form a circular dsDNA intermediate. Strand displacement synthesis by RT to the PBS and PPT ends produces a blunt ended, linear dsDNA copy of the viral genome that includes long terminal repeats (LTRs) at both ends.</text>
</comment>
<comment type="function">
    <molecule>Integrase</molecule>
    <text evidence="3">Catalyzes viral DNA integration into the host chromosome, by performing a series of DNA cutting and joining reactions. This enzyme activity takes place after virion entry into a cell and reverse transcription of the RNA genome in dsDNA. The first step in the integration process is 3' processing. This step requires a complex comprising the viral genome, matrix protein and integrase. This complex is called the pre-integration complex (PIC). The integrase protein removes 2 nucleotides from each 3' end of the viral DNA, leaving recessed CA OH's at the 3' ends. In the second step that requires cell division, the PIC enters cell nucleus. In the third step, termed strand transfer, the integrase protein joins the previously processed 3' ends to the 5' ends of strands of target cellular DNA at the site of integration. The last step is viral DNA integration into host chromosome.</text>
</comment>
<comment type="catalytic activity">
    <reaction evidence="8">
        <text>DNA(n) + a 2'-deoxyribonucleoside 5'-triphosphate = DNA(n+1) + diphosphate</text>
        <dbReference type="Rhea" id="RHEA:22508"/>
        <dbReference type="Rhea" id="RHEA-COMP:17339"/>
        <dbReference type="Rhea" id="RHEA-COMP:17340"/>
        <dbReference type="ChEBI" id="CHEBI:33019"/>
        <dbReference type="ChEBI" id="CHEBI:61560"/>
        <dbReference type="ChEBI" id="CHEBI:173112"/>
        <dbReference type="EC" id="2.7.7.49"/>
    </reaction>
</comment>
<comment type="catalytic activity">
    <reaction evidence="8">
        <text>DNA(n) + a 2'-deoxyribonucleoside 5'-triphosphate = DNA(n+1) + diphosphate</text>
        <dbReference type="Rhea" id="RHEA:22508"/>
        <dbReference type="Rhea" id="RHEA-COMP:17339"/>
        <dbReference type="Rhea" id="RHEA-COMP:17340"/>
        <dbReference type="ChEBI" id="CHEBI:33019"/>
        <dbReference type="ChEBI" id="CHEBI:61560"/>
        <dbReference type="ChEBI" id="CHEBI:173112"/>
        <dbReference type="EC" id="2.7.7.7"/>
    </reaction>
</comment>
<comment type="catalytic activity">
    <reaction evidence="9">
        <text>Endonucleolytic cleavage to 5'-phosphomonoester.</text>
        <dbReference type="EC" id="3.1.26.4"/>
    </reaction>
</comment>
<comment type="cofactor">
    <cofactor evidence="8">
        <name>Mg(2+)</name>
        <dbReference type="ChEBI" id="CHEBI:18420"/>
    </cofactor>
    <text evidence="8">The RT polymerase active site binds 2 magnesium ions.</text>
</comment>
<comment type="cofactor">
    <cofactor evidence="3">
        <name>Mg(2+)</name>
        <dbReference type="ChEBI" id="CHEBI:18420"/>
    </cofactor>
    <text evidence="3">Binds 1 magnesium ion for ribonuclease H (RNase H) activity.</text>
</comment>
<comment type="cofactor">
    <cofactor evidence="3">
        <name>Mg(2+)</name>
        <dbReference type="ChEBI" id="CHEBI:18420"/>
    </cofactor>
    <text evidence="3">Magnesium ions are required for integrase activity. Binds at least 1, maybe 2 magnesium ions.</text>
</comment>
<comment type="activity regulation">
    <molecule>Protease</molecule>
    <text evidence="3">Most efficiently inhibited by Amprenavir, which is able to block Gag-Pol processing in infected cells.</text>
</comment>
<comment type="subunit">
    <molecule>Capsid protein p30</molecule>
    <text evidence="3">Homohexamer; further associates as homomultimer (By similarity). The virus core is composed of a lattice formed from hexagonal rings, each containing six capsid monomers.</text>
</comment>
<comment type="subunit">
    <molecule>Gag-Pol polyprotein</molecule>
    <text evidence="3">Interacts (via PPXY motif) with host NEDD4 (By similarity). Interacts (via PSAP motif) with host TSG101.</text>
</comment>
<comment type="subunit">
    <molecule>Reverse transcriptase/ribonuclease H</molecule>
    <text evidence="3 12">The reverse transcriptase is a monomer (Potential). Interacts (via RNase domains) with host release factor ETF1; this interaction is essential for translational readthrough of amber codon between viral gag and pol genes, as well as for viral replication.</text>
</comment>
<comment type="subunit">
    <molecule>Integrase</molecule>
    <text evidence="3">Homodimer.</text>
</comment>
<comment type="subcellular location">
    <molecule>Gag-Pol polyprotein</molecule>
    <subcellularLocation>
        <location evidence="1">Virion</location>
    </subcellularLocation>
    <subcellularLocation>
        <location evidence="1">Host cell membrane</location>
        <topology evidence="1">Lipid-anchor</topology>
    </subcellularLocation>
    <subcellularLocation>
        <location evidence="1">Host late endosome membrane</location>
        <topology evidence="1">Lipid-anchor</topology>
    </subcellularLocation>
    <subcellularLocation>
        <location evidence="4">Host endosome</location>
        <location evidence="4">Host multivesicular body</location>
    </subcellularLocation>
    <text evidence="3">These locations are probably linked to virus assembly sites.</text>
</comment>
<comment type="subcellular location">
    <molecule>Matrix protein p15</molecule>
    <subcellularLocation>
        <location evidence="3">Virion</location>
    </subcellularLocation>
</comment>
<comment type="subcellular location">
    <molecule>Capsid protein p30</molecule>
    <subcellularLocation>
        <location evidence="3">Virion</location>
    </subcellularLocation>
</comment>
<comment type="subcellular location">
    <molecule>Nucleocapsid protein p10-Pol</molecule>
    <subcellularLocation>
        <location evidence="3">Virion</location>
    </subcellularLocation>
</comment>
<comment type="subcellular location">
    <molecule>Protease</molecule>
    <subcellularLocation>
        <location evidence="3">Virion</location>
    </subcellularLocation>
</comment>
<comment type="subcellular location">
    <molecule>RNA-binding phosphoprotein p12</molecule>
    <subcellularLocation>
        <location evidence="3">Host cytoplasm</location>
    </subcellularLocation>
    <text evidence="3">Localizes to the host cytoplasm early in infection and binds to the mitotic chromosomes later on.</text>
</comment>
<comment type="domain">
    <text evidence="1">Gag polyprotein: Late-budding domains (L domains) are short sequence motifs essential for viral particle budding. They recruit proteins of the host ESCRT machinery (Endosomal Sorting Complex Required for Transport) or ESCRT-associated proteins. RNA-binding phosphoprotein p12 contains one L domain: a PPXY motif which potentially interacts with the WW domain 3 of NEDD4 E3 ubiquitin ligase. Matrix protein p15 contains one L domain: a PTAP/PSAP motif, which potentially interacts with the UEV domain of TSG101.</text>
</comment>
<comment type="PTM">
    <molecule>Gag-Pol polyprotein</molecule>
    <text evidence="3">Specific enzymatic cleavages by the viral protease yield mature proteins. The protease is released by autocatalytic cleavage. The polyprotein is cleaved during and after budding, this process is termed maturation.</text>
</comment>
<comment type="PTM">
    <molecule>RNA-binding phosphoprotein p12</molecule>
    <text evidence="3">Phosphorylated on serine residues.</text>
</comment>
<comment type="miscellaneous">
    <molecule>Gag-Pol polyprotein</molecule>
    <text evidence="3">This protein is translated as a gag-pol fusion protein by episodic readthrough of the gag protein termination codon. Readthrough of the terminator codon TAG occurs between the codons for 521-Asp and 523-Gly.</text>
</comment>
<comment type="miscellaneous">
    <molecule>Nucleocapsid protein p10-Pol</molecule>
    <text evidence="3">Nucleocapsid protein p10-Pol released from Pol polyprotein (NC-pol) is a few amino acids shorter than the nucleocapsid protein p10 released from Gag polyprotein (NC-gag).</text>
</comment>
<comment type="miscellaneous">
    <molecule>Reverse transcriptase/ribonuclease H</molecule>
    <text evidence="8">The reverse transcriptase is an error-prone enzyme that lacks a proof-reading function. High mutations rate is a direct consequence of this characteristic. RT also displays frequent template switching leading to high recombination rate. Recombination mostly occurs between homologous regions of the two copackaged RNA genomes. If these two RNA molecules derive from different viral strains, reverse transcription will give rise to highly recombinated proviral DNAs.</text>
</comment>
<comment type="similarity">
    <text evidence="12">Belongs to the retroviral Pol polyprotein family.</text>
</comment>
<comment type="sequence caution" evidence="12">
    <conflict type="erroneous initiation">
        <sequence resource="EMBL-CDS" id="ALV83312"/>
    </conflict>
    <text>Truncated N-terminus.</text>
</comment>
<comment type="sequence caution" evidence="12">
    <conflict type="miscellaneous discrepancy">
        <sequence resource="EMBL-CDS" id="CAA24515"/>
    </conflict>
</comment>
<name>POL_WMSV</name>
<proteinExistence type="inferred from homology"/>
<accession>P03359</accession>
<accession>A0A0U3TYK5</accession>